<evidence type="ECO:0000250" key="1">
    <source>
        <dbReference type="UniProtKB" id="Q8WWY3"/>
    </source>
</evidence>
<evidence type="ECO:0000255" key="2">
    <source>
        <dbReference type="PROSITE-ProRule" id="PRU00690"/>
    </source>
</evidence>
<evidence type="ECO:0000256" key="3">
    <source>
        <dbReference type="SAM" id="MobiDB-lite"/>
    </source>
</evidence>
<evidence type="ECO:0000303" key="4">
    <source>
    </source>
</evidence>
<evidence type="ECO:0000303" key="5">
    <source>
    </source>
</evidence>
<evidence type="ECO:0000305" key="6"/>
<evidence type="ECO:0007744" key="7">
    <source>
    </source>
</evidence>
<evidence type="ECO:0007744" key="8">
    <source>
    </source>
</evidence>
<reference key="1">
    <citation type="journal article" date="2002" name="EMBO J.">
        <title>Protein 61K, encoded by a gene (PRPF31) linked to autosomal dominant retinitis pigmentosa, is required for U4/U6.U5 tri-snRNP formation and pre-mRNA splicing.</title>
        <authorList>
            <person name="Makarova O.V."/>
            <person name="Makarov E.M."/>
            <person name="Liu S."/>
            <person name="Vornlocher H.-P."/>
            <person name="Luehrmann R."/>
        </authorList>
    </citation>
    <scope>NUCLEOTIDE SEQUENCE [MRNA] (ISOFORM 1)</scope>
    <source>
        <strain>C57BL/6J X CBA/J</strain>
        <tissue>Lung</tissue>
    </source>
</reference>
<reference key="2">
    <citation type="journal article" date="2005" name="Science">
        <title>The transcriptional landscape of the mammalian genome.</title>
        <authorList>
            <person name="Carninci P."/>
            <person name="Kasukawa T."/>
            <person name="Katayama S."/>
            <person name="Gough J."/>
            <person name="Frith M.C."/>
            <person name="Maeda N."/>
            <person name="Oyama R."/>
            <person name="Ravasi T."/>
            <person name="Lenhard B."/>
            <person name="Wells C."/>
            <person name="Kodzius R."/>
            <person name="Shimokawa K."/>
            <person name="Bajic V.B."/>
            <person name="Brenner S.E."/>
            <person name="Batalov S."/>
            <person name="Forrest A.R."/>
            <person name="Zavolan M."/>
            <person name="Davis M.J."/>
            <person name="Wilming L.G."/>
            <person name="Aidinis V."/>
            <person name="Allen J.E."/>
            <person name="Ambesi-Impiombato A."/>
            <person name="Apweiler R."/>
            <person name="Aturaliya R.N."/>
            <person name="Bailey T.L."/>
            <person name="Bansal M."/>
            <person name="Baxter L."/>
            <person name="Beisel K.W."/>
            <person name="Bersano T."/>
            <person name="Bono H."/>
            <person name="Chalk A.M."/>
            <person name="Chiu K.P."/>
            <person name="Choudhary V."/>
            <person name="Christoffels A."/>
            <person name="Clutterbuck D.R."/>
            <person name="Crowe M.L."/>
            <person name="Dalla E."/>
            <person name="Dalrymple B.P."/>
            <person name="de Bono B."/>
            <person name="Della Gatta G."/>
            <person name="di Bernardo D."/>
            <person name="Down T."/>
            <person name="Engstrom P."/>
            <person name="Fagiolini M."/>
            <person name="Faulkner G."/>
            <person name="Fletcher C.F."/>
            <person name="Fukushima T."/>
            <person name="Furuno M."/>
            <person name="Futaki S."/>
            <person name="Gariboldi M."/>
            <person name="Georgii-Hemming P."/>
            <person name="Gingeras T.R."/>
            <person name="Gojobori T."/>
            <person name="Green R.E."/>
            <person name="Gustincich S."/>
            <person name="Harbers M."/>
            <person name="Hayashi Y."/>
            <person name="Hensch T.K."/>
            <person name="Hirokawa N."/>
            <person name="Hill D."/>
            <person name="Huminiecki L."/>
            <person name="Iacono M."/>
            <person name="Ikeo K."/>
            <person name="Iwama A."/>
            <person name="Ishikawa T."/>
            <person name="Jakt M."/>
            <person name="Kanapin A."/>
            <person name="Katoh M."/>
            <person name="Kawasawa Y."/>
            <person name="Kelso J."/>
            <person name="Kitamura H."/>
            <person name="Kitano H."/>
            <person name="Kollias G."/>
            <person name="Krishnan S.P."/>
            <person name="Kruger A."/>
            <person name="Kummerfeld S.K."/>
            <person name="Kurochkin I.V."/>
            <person name="Lareau L.F."/>
            <person name="Lazarevic D."/>
            <person name="Lipovich L."/>
            <person name="Liu J."/>
            <person name="Liuni S."/>
            <person name="McWilliam S."/>
            <person name="Madan Babu M."/>
            <person name="Madera M."/>
            <person name="Marchionni L."/>
            <person name="Matsuda H."/>
            <person name="Matsuzawa S."/>
            <person name="Miki H."/>
            <person name="Mignone F."/>
            <person name="Miyake S."/>
            <person name="Morris K."/>
            <person name="Mottagui-Tabar S."/>
            <person name="Mulder N."/>
            <person name="Nakano N."/>
            <person name="Nakauchi H."/>
            <person name="Ng P."/>
            <person name="Nilsson R."/>
            <person name="Nishiguchi S."/>
            <person name="Nishikawa S."/>
            <person name="Nori F."/>
            <person name="Ohara O."/>
            <person name="Okazaki Y."/>
            <person name="Orlando V."/>
            <person name="Pang K.C."/>
            <person name="Pavan W.J."/>
            <person name="Pavesi G."/>
            <person name="Pesole G."/>
            <person name="Petrovsky N."/>
            <person name="Piazza S."/>
            <person name="Reed J."/>
            <person name="Reid J.F."/>
            <person name="Ring B.Z."/>
            <person name="Ringwald M."/>
            <person name="Rost B."/>
            <person name="Ruan Y."/>
            <person name="Salzberg S.L."/>
            <person name="Sandelin A."/>
            <person name="Schneider C."/>
            <person name="Schoenbach C."/>
            <person name="Sekiguchi K."/>
            <person name="Semple C.A."/>
            <person name="Seno S."/>
            <person name="Sessa L."/>
            <person name="Sheng Y."/>
            <person name="Shibata Y."/>
            <person name="Shimada H."/>
            <person name="Shimada K."/>
            <person name="Silva D."/>
            <person name="Sinclair B."/>
            <person name="Sperling S."/>
            <person name="Stupka E."/>
            <person name="Sugiura K."/>
            <person name="Sultana R."/>
            <person name="Takenaka Y."/>
            <person name="Taki K."/>
            <person name="Tammoja K."/>
            <person name="Tan S.L."/>
            <person name="Tang S."/>
            <person name="Taylor M.S."/>
            <person name="Tegner J."/>
            <person name="Teichmann S.A."/>
            <person name="Ueda H.R."/>
            <person name="van Nimwegen E."/>
            <person name="Verardo R."/>
            <person name="Wei C.L."/>
            <person name="Yagi K."/>
            <person name="Yamanishi H."/>
            <person name="Zabarovsky E."/>
            <person name="Zhu S."/>
            <person name="Zimmer A."/>
            <person name="Hide W."/>
            <person name="Bult C."/>
            <person name="Grimmond S.M."/>
            <person name="Teasdale R.D."/>
            <person name="Liu E.T."/>
            <person name="Brusic V."/>
            <person name="Quackenbush J."/>
            <person name="Wahlestedt C."/>
            <person name="Mattick J.S."/>
            <person name="Hume D.A."/>
            <person name="Kai C."/>
            <person name="Sasaki D."/>
            <person name="Tomaru Y."/>
            <person name="Fukuda S."/>
            <person name="Kanamori-Katayama M."/>
            <person name="Suzuki M."/>
            <person name="Aoki J."/>
            <person name="Arakawa T."/>
            <person name="Iida J."/>
            <person name="Imamura K."/>
            <person name="Itoh M."/>
            <person name="Kato T."/>
            <person name="Kawaji H."/>
            <person name="Kawagashira N."/>
            <person name="Kawashima T."/>
            <person name="Kojima M."/>
            <person name="Kondo S."/>
            <person name="Konno H."/>
            <person name="Nakano K."/>
            <person name="Ninomiya N."/>
            <person name="Nishio T."/>
            <person name="Okada M."/>
            <person name="Plessy C."/>
            <person name="Shibata K."/>
            <person name="Shiraki T."/>
            <person name="Suzuki S."/>
            <person name="Tagami M."/>
            <person name="Waki K."/>
            <person name="Watahiki A."/>
            <person name="Okamura-Oho Y."/>
            <person name="Suzuki H."/>
            <person name="Kawai J."/>
            <person name="Hayashizaki Y."/>
        </authorList>
    </citation>
    <scope>NUCLEOTIDE SEQUENCE [LARGE SCALE MRNA] (ISOFORMS 1 AND 4)</scope>
    <source>
        <strain>C57BL/6J</strain>
        <tissue>Cerebellum</tissue>
        <tissue>Testis</tissue>
    </source>
</reference>
<reference key="3">
    <citation type="submission" date="2005-07" db="EMBL/GenBank/DDBJ databases">
        <title>Cloning of mouse full open reading frames in Gateway(R) system entry vector (pDONR201).</title>
        <authorList>
            <person name="Ebert L."/>
            <person name="Muenstermann E."/>
            <person name="Schatten R."/>
            <person name="Henze S."/>
            <person name="Bohn E."/>
            <person name="Mollenhauer J."/>
            <person name="Wiemann S."/>
            <person name="Schick M."/>
            <person name="Korn B."/>
        </authorList>
    </citation>
    <scope>NUCLEOTIDE SEQUENCE [LARGE SCALE MRNA] (ISOFORM 1)</scope>
</reference>
<reference key="4">
    <citation type="journal article" date="2009" name="PLoS Biol.">
        <title>Lineage-specific biology revealed by a finished genome assembly of the mouse.</title>
        <authorList>
            <person name="Church D.M."/>
            <person name="Goodstadt L."/>
            <person name="Hillier L.W."/>
            <person name="Zody M.C."/>
            <person name="Goldstein S."/>
            <person name="She X."/>
            <person name="Bult C.J."/>
            <person name="Agarwala R."/>
            <person name="Cherry J.L."/>
            <person name="DiCuccio M."/>
            <person name="Hlavina W."/>
            <person name="Kapustin Y."/>
            <person name="Meric P."/>
            <person name="Maglott D."/>
            <person name="Birtle Z."/>
            <person name="Marques A.C."/>
            <person name="Graves T."/>
            <person name="Zhou S."/>
            <person name="Teague B."/>
            <person name="Potamousis K."/>
            <person name="Churas C."/>
            <person name="Place M."/>
            <person name="Herschleb J."/>
            <person name="Runnheim R."/>
            <person name="Forrest D."/>
            <person name="Amos-Landgraf J."/>
            <person name="Schwartz D.C."/>
            <person name="Cheng Z."/>
            <person name="Lindblad-Toh K."/>
            <person name="Eichler E.E."/>
            <person name="Ponting C.P."/>
        </authorList>
    </citation>
    <scope>NUCLEOTIDE SEQUENCE [LARGE SCALE GENOMIC DNA]</scope>
    <source>
        <strain>C57BL/6J</strain>
    </source>
</reference>
<reference key="5">
    <citation type="journal article" date="2004" name="Genome Res.">
        <title>The status, quality, and expansion of the NIH full-length cDNA project: the Mammalian Gene Collection (MGC).</title>
        <authorList>
            <consortium name="The MGC Project Team"/>
        </authorList>
    </citation>
    <scope>NUCLEOTIDE SEQUENCE [LARGE SCALE MRNA] (ISOFORMS 1 AND 2)</scope>
    <source>
        <strain>FVB/N</strain>
        <strain>NMRI</strain>
        <tissue>Brain</tissue>
        <tissue>Mammary tumor</tissue>
    </source>
</reference>
<reference key="6">
    <citation type="journal article" date="2010" name="Cell">
        <title>A tissue-specific atlas of mouse protein phosphorylation and expression.</title>
        <authorList>
            <person name="Huttlin E.L."/>
            <person name="Jedrychowski M.P."/>
            <person name="Elias J.E."/>
            <person name="Goswami T."/>
            <person name="Rad R."/>
            <person name="Beausoleil S.A."/>
            <person name="Villen J."/>
            <person name="Haas W."/>
            <person name="Sowa M.E."/>
            <person name="Gygi S.P."/>
        </authorList>
    </citation>
    <scope>PHOSPHORYLATION [LARGE SCALE ANALYSIS] AT THR-455</scope>
    <scope>IDENTIFICATION BY MASS SPECTROMETRY [LARGE SCALE ANALYSIS]</scope>
    <source>
        <tissue>Brain</tissue>
        <tissue>Brown adipose tissue</tissue>
        <tissue>Heart</tissue>
        <tissue>Lung</tissue>
        <tissue>Spleen</tissue>
        <tissue>Testis</tissue>
    </source>
</reference>
<reference key="7">
    <citation type="journal article" date="2013" name="Mol. Cell">
        <title>SIRT5-mediated lysine desuccinylation impacts diverse metabolic pathways.</title>
        <authorList>
            <person name="Park J."/>
            <person name="Chen Y."/>
            <person name="Tishkoff D.X."/>
            <person name="Peng C."/>
            <person name="Tan M."/>
            <person name="Dai L."/>
            <person name="Xie Z."/>
            <person name="Zhang Y."/>
            <person name="Zwaans B.M."/>
            <person name="Skinner M.E."/>
            <person name="Lombard D.B."/>
            <person name="Zhao Y."/>
        </authorList>
    </citation>
    <scope>ACETYLATION [LARGE SCALE ANALYSIS] AT LYS-438</scope>
    <scope>IDENTIFICATION BY MASS SPECTROMETRY [LARGE SCALE ANALYSIS]</scope>
    <source>
        <tissue>Embryonic fibroblast</tissue>
    </source>
</reference>
<protein>
    <recommendedName>
        <fullName>U4/U6 small nuclear ribonucleoprotein Prp31</fullName>
    </recommendedName>
    <alternativeName>
        <fullName>Pre-mRNA-processing factor 31</fullName>
    </alternativeName>
    <alternativeName>
        <fullName>U4/U6 snRNP 61 kDa protein</fullName>
        <shortName>Protein 61K</shortName>
    </alternativeName>
</protein>
<keyword id="KW-0007">Acetylation</keyword>
<keyword id="KW-0025">Alternative splicing</keyword>
<keyword id="KW-0175">Coiled coil</keyword>
<keyword id="KW-1017">Isopeptide bond</keyword>
<keyword id="KW-0507">mRNA processing</keyword>
<keyword id="KW-0508">mRNA splicing</keyword>
<keyword id="KW-0539">Nucleus</keyword>
<keyword id="KW-0597">Phosphoprotein</keyword>
<keyword id="KW-1185">Reference proteome</keyword>
<keyword id="KW-0687">Ribonucleoprotein</keyword>
<keyword id="KW-0694">RNA-binding</keyword>
<keyword id="KW-0747">Spliceosome</keyword>
<keyword id="KW-0832">Ubl conjugation</keyword>
<dbReference type="EMBL" id="AY040823">
    <property type="protein sequence ID" value="AAK77987.1"/>
    <property type="molecule type" value="mRNA"/>
</dbReference>
<dbReference type="EMBL" id="AK005294">
    <property type="protein sequence ID" value="BAC25109.1"/>
    <property type="status" value="ALT_FRAME"/>
    <property type="molecule type" value="mRNA"/>
</dbReference>
<dbReference type="EMBL" id="AK033190">
    <property type="protein sequence ID" value="BAC28192.1"/>
    <property type="molecule type" value="mRNA"/>
</dbReference>
<dbReference type="EMBL" id="AK033283">
    <property type="protein sequence ID" value="BAC28220.1"/>
    <property type="molecule type" value="mRNA"/>
</dbReference>
<dbReference type="EMBL" id="AK044398">
    <property type="protein sequence ID" value="BAC31903.1"/>
    <property type="status" value="ALT_SEQ"/>
    <property type="molecule type" value="mRNA"/>
</dbReference>
<dbReference type="EMBL" id="AK044457">
    <property type="protein sequence ID" value="BAC31931.1"/>
    <property type="status" value="ALT_SEQ"/>
    <property type="molecule type" value="mRNA"/>
</dbReference>
<dbReference type="EMBL" id="AK051260">
    <property type="protein sequence ID" value="BAC34578.1"/>
    <property type="status" value="ALT_FRAME"/>
    <property type="molecule type" value="mRNA"/>
</dbReference>
<dbReference type="EMBL" id="CT010189">
    <property type="protein sequence ID" value="CAJ18397.1"/>
    <property type="molecule type" value="mRNA"/>
</dbReference>
<dbReference type="EMBL" id="AC130680">
    <property type="status" value="NOT_ANNOTATED_CDS"/>
    <property type="molecule type" value="Genomic_DNA"/>
</dbReference>
<dbReference type="EMBL" id="BC018376">
    <property type="protein sequence ID" value="AAH18376.1"/>
    <property type="molecule type" value="mRNA"/>
</dbReference>
<dbReference type="EMBL" id="BC057877">
    <property type="protein sequence ID" value="AAH57877.1"/>
    <property type="molecule type" value="mRNA"/>
</dbReference>
<dbReference type="EMBL" id="BC061461">
    <property type="protein sequence ID" value="AAH61461.1"/>
    <property type="molecule type" value="mRNA"/>
</dbReference>
<dbReference type="CCDS" id="CCDS39729.1">
    <molecule id="Q8CCF0-1"/>
</dbReference>
<dbReference type="CCDS" id="CCDS51965.1">
    <molecule id="Q8CCF0-2"/>
</dbReference>
<dbReference type="RefSeq" id="NP_001153186.1">
    <molecule id="Q8CCF0-2"/>
    <property type="nucleotide sequence ID" value="NM_001159714.1"/>
</dbReference>
<dbReference type="RefSeq" id="NP_081604.3">
    <molecule id="Q8CCF0-1"/>
    <property type="nucleotide sequence ID" value="NM_027328.4"/>
</dbReference>
<dbReference type="SMR" id="Q8CCF0"/>
<dbReference type="BioGRID" id="213160">
    <property type="interactions" value="17"/>
</dbReference>
<dbReference type="FunCoup" id="Q8CCF0">
    <property type="interactions" value="4178"/>
</dbReference>
<dbReference type="IntAct" id="Q8CCF0">
    <property type="interactions" value="2"/>
</dbReference>
<dbReference type="STRING" id="10090.ENSMUSP00000008517"/>
<dbReference type="GlyGen" id="Q8CCF0">
    <property type="glycosylation" value="1 site, 1 N-linked glycan (1 site)"/>
</dbReference>
<dbReference type="iPTMnet" id="Q8CCF0"/>
<dbReference type="PhosphoSitePlus" id="Q8CCF0"/>
<dbReference type="SwissPalm" id="Q8CCF0"/>
<dbReference type="jPOST" id="Q8CCF0"/>
<dbReference type="PaxDb" id="10090-ENSMUSP00000008517"/>
<dbReference type="PeptideAtlas" id="Q8CCF0"/>
<dbReference type="ProteomicsDB" id="291893">
    <molecule id="Q8CCF0-1"/>
</dbReference>
<dbReference type="ProteomicsDB" id="291894">
    <molecule id="Q8CCF0-2"/>
</dbReference>
<dbReference type="Pumba" id="Q8CCF0"/>
<dbReference type="Antibodypedia" id="32797">
    <property type="antibodies" value="281 antibodies from 30 providers"/>
</dbReference>
<dbReference type="DNASU" id="68988"/>
<dbReference type="Ensembl" id="ENSMUST00000008517.13">
    <molecule id="Q8CCF0-1"/>
    <property type="protein sequence ID" value="ENSMUSP00000008517.7"/>
    <property type="gene ID" value="ENSMUSG00000008373.17"/>
</dbReference>
<dbReference type="Ensembl" id="ENSMUST00000108636.2">
    <molecule id="Q8CCF0-2"/>
    <property type="protein sequence ID" value="ENSMUSP00000104276.2"/>
    <property type="gene ID" value="ENSMUSG00000008373.17"/>
</dbReference>
<dbReference type="Ensembl" id="ENSMUST00000125782.8">
    <molecule id="Q8CCF0-4"/>
    <property type="protein sequence ID" value="ENSMUSP00000146017.2"/>
    <property type="gene ID" value="ENSMUSG00000008373.17"/>
</dbReference>
<dbReference type="Ensembl" id="ENSMUST00000179769.8">
    <molecule id="Q8CCF0-2"/>
    <property type="protein sequence ID" value="ENSMUSP00000136031.2"/>
    <property type="gene ID" value="ENSMUSG00000008373.17"/>
</dbReference>
<dbReference type="GeneID" id="68988"/>
<dbReference type="KEGG" id="mmu:68988"/>
<dbReference type="UCSC" id="uc009evi.2">
    <molecule id="Q8CCF0-1"/>
    <property type="organism name" value="mouse"/>
</dbReference>
<dbReference type="UCSC" id="uc012ewf.1">
    <molecule id="Q8CCF0-2"/>
    <property type="organism name" value="mouse"/>
</dbReference>
<dbReference type="AGR" id="MGI:1916238"/>
<dbReference type="CTD" id="26121"/>
<dbReference type="MGI" id="MGI:1916238">
    <property type="gene designation" value="Prpf31"/>
</dbReference>
<dbReference type="VEuPathDB" id="HostDB:ENSMUSG00000008373"/>
<dbReference type="eggNOG" id="KOG2574">
    <property type="taxonomic scope" value="Eukaryota"/>
</dbReference>
<dbReference type="GeneTree" id="ENSGT00550000075069"/>
<dbReference type="HOGENOM" id="CLU_026337_2_0_1"/>
<dbReference type="InParanoid" id="Q8CCF0"/>
<dbReference type="OMA" id="IGNGPMD"/>
<dbReference type="OrthoDB" id="4771285at2759"/>
<dbReference type="PhylomeDB" id="Q8CCF0"/>
<dbReference type="TreeFam" id="TF300677"/>
<dbReference type="Reactome" id="R-MMU-72163">
    <property type="pathway name" value="mRNA Splicing - Major Pathway"/>
</dbReference>
<dbReference type="BioGRID-ORCS" id="68988">
    <property type="hits" value="25 hits in 80 CRISPR screens"/>
</dbReference>
<dbReference type="PRO" id="PR:Q8CCF0"/>
<dbReference type="Proteomes" id="UP000000589">
    <property type="component" value="Chromosome 7"/>
</dbReference>
<dbReference type="RNAct" id="Q8CCF0">
    <property type="molecule type" value="protein"/>
</dbReference>
<dbReference type="Bgee" id="ENSMUSG00000008373">
    <property type="expression patterns" value="Expressed in primitive streak and 265 other cell types or tissues"/>
</dbReference>
<dbReference type="GO" id="GO:0015030">
    <property type="term" value="C:Cajal body"/>
    <property type="evidence" value="ECO:0000266"/>
    <property type="project" value="MGI"/>
</dbReference>
<dbReference type="GO" id="GO:0071339">
    <property type="term" value="C:MLL1 complex"/>
    <property type="evidence" value="ECO:0000250"/>
    <property type="project" value="UniProtKB"/>
</dbReference>
<dbReference type="GO" id="GO:0016607">
    <property type="term" value="C:nuclear speck"/>
    <property type="evidence" value="ECO:0000266"/>
    <property type="project" value="MGI"/>
</dbReference>
<dbReference type="GO" id="GO:0005634">
    <property type="term" value="C:nucleus"/>
    <property type="evidence" value="ECO:0000250"/>
    <property type="project" value="UniProtKB"/>
</dbReference>
<dbReference type="GO" id="GO:0071005">
    <property type="term" value="C:U2-type precatalytic spliceosome"/>
    <property type="evidence" value="ECO:0000250"/>
    <property type="project" value="UniProtKB"/>
</dbReference>
<dbReference type="GO" id="GO:0005687">
    <property type="term" value="C:U4 snRNP"/>
    <property type="evidence" value="ECO:0007669"/>
    <property type="project" value="Ensembl"/>
</dbReference>
<dbReference type="GO" id="GO:0046540">
    <property type="term" value="C:U4/U6 x U5 tri-snRNP complex"/>
    <property type="evidence" value="ECO:0000250"/>
    <property type="project" value="UniProtKB"/>
</dbReference>
<dbReference type="GO" id="GO:0005690">
    <property type="term" value="C:U4atac snRNP"/>
    <property type="evidence" value="ECO:0000250"/>
    <property type="project" value="UniProtKB"/>
</dbReference>
<dbReference type="GO" id="GO:0042802">
    <property type="term" value="F:identical protein binding"/>
    <property type="evidence" value="ECO:0007669"/>
    <property type="project" value="Ensembl"/>
</dbReference>
<dbReference type="GO" id="GO:0030674">
    <property type="term" value="F:protein-macromolecule adaptor activity"/>
    <property type="evidence" value="ECO:0000250"/>
    <property type="project" value="UniProtKB"/>
</dbReference>
<dbReference type="GO" id="GO:0043021">
    <property type="term" value="F:ribonucleoprotein complex binding"/>
    <property type="evidence" value="ECO:0000266"/>
    <property type="project" value="MGI"/>
</dbReference>
<dbReference type="GO" id="GO:0070990">
    <property type="term" value="F:snRNP binding"/>
    <property type="evidence" value="ECO:0007669"/>
    <property type="project" value="Ensembl"/>
</dbReference>
<dbReference type="GO" id="GO:0030621">
    <property type="term" value="F:U4 snRNA binding"/>
    <property type="evidence" value="ECO:0007669"/>
    <property type="project" value="Ensembl"/>
</dbReference>
<dbReference type="GO" id="GO:0030622">
    <property type="term" value="F:U4atac snRNA binding"/>
    <property type="evidence" value="ECO:0000250"/>
    <property type="project" value="UniProtKB"/>
</dbReference>
<dbReference type="GO" id="GO:0000398">
    <property type="term" value="P:mRNA splicing, via spliceosome"/>
    <property type="evidence" value="ECO:0000250"/>
    <property type="project" value="UniProtKB"/>
</dbReference>
<dbReference type="GO" id="GO:0071166">
    <property type="term" value="P:ribonucleoprotein complex localization"/>
    <property type="evidence" value="ECO:0007669"/>
    <property type="project" value="Ensembl"/>
</dbReference>
<dbReference type="GO" id="GO:0000244">
    <property type="term" value="P:spliceosomal tri-snRNP complex assembly"/>
    <property type="evidence" value="ECO:0000250"/>
    <property type="project" value="UniProtKB"/>
</dbReference>
<dbReference type="FunFam" id="1.10.287.4070:FF:000003">
    <property type="entry name" value="U4/U6 small nuclear ribonucleoprotein PRP31"/>
    <property type="match status" value="1"/>
</dbReference>
<dbReference type="FunFam" id="1.10.246.90:FF:000002">
    <property type="entry name" value="U4/U6 small nuclear ribonucleoprotein Prp31"/>
    <property type="match status" value="1"/>
</dbReference>
<dbReference type="Gene3D" id="1.10.287.4070">
    <property type="match status" value="1"/>
</dbReference>
<dbReference type="Gene3D" id="1.10.246.90">
    <property type="entry name" value="Nop domain"/>
    <property type="match status" value="1"/>
</dbReference>
<dbReference type="InterPro" id="IPR042239">
    <property type="entry name" value="Nop_C"/>
</dbReference>
<dbReference type="InterPro" id="IPR002687">
    <property type="entry name" value="Nop_dom"/>
</dbReference>
<dbReference type="InterPro" id="IPR036070">
    <property type="entry name" value="Nop_dom_sf"/>
</dbReference>
<dbReference type="InterPro" id="IPR012976">
    <property type="entry name" value="NOSIC"/>
</dbReference>
<dbReference type="InterPro" id="IPR027105">
    <property type="entry name" value="Prp31"/>
</dbReference>
<dbReference type="InterPro" id="IPR019175">
    <property type="entry name" value="Prp31_C"/>
</dbReference>
<dbReference type="PANTHER" id="PTHR13904">
    <property type="entry name" value="PRE-MRNA SPLICING FACTOR PRP31"/>
    <property type="match status" value="1"/>
</dbReference>
<dbReference type="PANTHER" id="PTHR13904:SF0">
    <property type="entry name" value="U4_U6 SMALL NUCLEAR RIBONUCLEOPROTEIN PRP31"/>
    <property type="match status" value="1"/>
</dbReference>
<dbReference type="Pfam" id="PF01798">
    <property type="entry name" value="Nop"/>
    <property type="match status" value="1"/>
</dbReference>
<dbReference type="Pfam" id="PF09785">
    <property type="entry name" value="Prp31_C"/>
    <property type="match status" value="1"/>
</dbReference>
<dbReference type="SMART" id="SM00931">
    <property type="entry name" value="NOSIC"/>
    <property type="match status" value="1"/>
</dbReference>
<dbReference type="SUPFAM" id="SSF89124">
    <property type="entry name" value="Nop domain"/>
    <property type="match status" value="1"/>
</dbReference>
<dbReference type="PROSITE" id="PS51358">
    <property type="entry name" value="NOP"/>
    <property type="match status" value="1"/>
</dbReference>
<feature type="chain" id="PRO_0000227800" description="U4/U6 small nuclear ribonucleoprotein Prp31">
    <location>
        <begin position="1"/>
        <end position="499"/>
    </location>
</feature>
<feature type="domain" description="Nop" evidence="2">
    <location>
        <begin position="215"/>
        <end position="333"/>
    </location>
</feature>
<feature type="region of interest" description="Disordered" evidence="3">
    <location>
        <begin position="1"/>
        <end position="43"/>
    </location>
</feature>
<feature type="region of interest" description="Disordered" evidence="3">
    <location>
        <begin position="334"/>
        <end position="357"/>
    </location>
</feature>
<feature type="coiled-coil region" evidence="1">
    <location>
        <begin position="85"/>
        <end position="120"/>
    </location>
</feature>
<feature type="coiled-coil region" evidence="1">
    <location>
        <begin position="181"/>
        <end position="215"/>
    </location>
</feature>
<feature type="short sequence motif" description="Nuclear localization signal (NLS)" evidence="1">
    <location>
        <begin position="351"/>
        <end position="364"/>
    </location>
</feature>
<feature type="compositionally biased region" description="Acidic residues" evidence="3">
    <location>
        <begin position="7"/>
        <end position="40"/>
    </location>
</feature>
<feature type="site" description="Interaction with U4 snRNA" evidence="1">
    <location>
        <position position="247"/>
    </location>
</feature>
<feature type="site" description="Interaction with U4 snRNA and U4atac snRNA" evidence="1">
    <location>
        <position position="270"/>
    </location>
</feature>
<feature type="site" description="Interaction with U4atac snRNA" evidence="1">
    <location>
        <position position="289"/>
    </location>
</feature>
<feature type="site" description="Interaction with U4 snRNA and U4atac snRNA" evidence="1">
    <location>
        <position position="293"/>
    </location>
</feature>
<feature type="site" description="Interaction with U4 snRNA and U4atac snRNA" evidence="1">
    <location>
        <position position="298"/>
    </location>
</feature>
<feature type="modified residue" description="Phosphoserine" evidence="1">
    <location>
        <position position="379"/>
    </location>
</feature>
<feature type="modified residue" description="Phosphoserine" evidence="1">
    <location>
        <position position="395"/>
    </location>
</feature>
<feature type="modified residue" description="Phosphoserine" evidence="1">
    <location>
        <position position="432"/>
    </location>
</feature>
<feature type="modified residue" description="N6-acetyllysine" evidence="8">
    <location>
        <position position="438"/>
    </location>
</feature>
<feature type="modified residue" description="Phosphoserine" evidence="1">
    <location>
        <position position="439"/>
    </location>
</feature>
<feature type="modified residue" description="Phosphothreonine" evidence="1">
    <location>
        <position position="440"/>
    </location>
</feature>
<feature type="modified residue" description="Phosphoserine" evidence="1">
    <location>
        <position position="450"/>
    </location>
</feature>
<feature type="modified residue" description="Phosphothreonine" evidence="7">
    <location>
        <position position="455"/>
    </location>
</feature>
<feature type="cross-link" description="Glycyl lysine isopeptide (Lys-Gly) (interchain with G-Cter in SUMO2)" evidence="1">
    <location>
        <position position="471"/>
    </location>
</feature>
<feature type="cross-link" description="Glycyl lysine isopeptide (Lys-Gly) (interchain with G-Cter in SUMO2)" evidence="1">
    <location>
        <position position="478"/>
    </location>
</feature>
<feature type="splice variant" id="VSP_017589" description="In isoform 4." evidence="5">
    <original>FAEIMM</original>
    <variation>VSLLRS</variation>
    <location>
        <begin position="60"/>
        <end position="65"/>
    </location>
</feature>
<feature type="splice variant" id="VSP_017590" description="In isoform 4." evidence="5">
    <location>
        <begin position="66"/>
        <end position="499"/>
    </location>
</feature>
<feature type="splice variant" id="VSP_017591" description="In isoform 2." evidence="4">
    <location>
        <begin position="316"/>
        <end position="321"/>
    </location>
</feature>
<feature type="sequence conflict" description="In Ref. 1; AAK77987, 2; BAC31931, 3; CAJ18397 and 5; AAH18376/AAH57877." evidence="6" ref="1 2 3 5">
    <original>V</original>
    <variation>A</variation>
    <location>
        <position position="77"/>
    </location>
</feature>
<feature type="sequence conflict" description="In Ref. 2; BAC28192." evidence="6" ref="2">
    <original>E</original>
    <variation>V</variation>
    <location>
        <position position="104"/>
    </location>
</feature>
<feature type="sequence conflict" description="In Ref. 2; BAC28220/BAC28192." evidence="6" ref="2">
    <original>Q</original>
    <variation>R</variation>
    <location>
        <position position="177"/>
    </location>
</feature>
<feature type="sequence conflict" description="In Ref. 2; BAC25109." evidence="6" ref="2">
    <original>E</original>
    <variation>G</variation>
    <location>
        <position position="382"/>
    </location>
</feature>
<feature type="sequence conflict" description="In Ref. 5; AAH61461." evidence="6" ref="5">
    <original>S</original>
    <variation>F</variation>
    <location>
        <position position="481"/>
    </location>
</feature>
<gene>
    <name type="primary">Prpf31</name>
    <name type="synonym">Prp31</name>
</gene>
<comment type="function">
    <text evidence="1">Involved in pre-mRNA splicing as component of the spliceosome. Required for the assembly of the U4/U5/U6 tri-snRNP complex, one of the building blocks of the spliceosome.</text>
</comment>
<comment type="subunit">
    <text evidence="1">Identified in the spliceosome B complex. Component of the U4/U6-U5 tri-snRNP complex composed of the U4, U6 and U5 snRNAs and at least PRPF3, PRPF4, PRPF6, PRPF8, PRPF31, SNRNP200, TXNL4A, SNRNP40, DDX23, CD2BP2, PPIH, SNU13, EFTUD2, SART1 and USP39. Interacts with a complex formed by SNU13 and U4 snRNA, but not with SNU13 or U4 snRNA alone. The complex formed by SNU13 and PRPF31 also binds U4atac snRNA, a characteristic component of specific, less abundant spliceosomal complexes. Interacts with PRPF6/U5 snRNP-associated 102 kDa protein. Component of some MLL1/MLL complex, at least composed of the core components KMT2A/MLL1, ASH2L, HCFC1/HCF1, WDR5 and RBBP5, as well as the facultative components BACC1, CHD8, E2F6, HSP70, INO80C, KANSL1, LAS1L, MAX, MCRS1, MGA, KAT8/MOF, PELP1, PHF20, PRP31, RING2, RUVB1/TIP49A, RUVB2/TIP49B, SENP3, TAF1, TAF4, TAF6, TAF7, TAF9 and TEX10. Interacts (via its NLS) with CTNNBL1. Interacts with USH1G (By similarity).</text>
</comment>
<comment type="subcellular location">
    <subcellularLocation>
        <location evidence="1">Nucleus</location>
    </subcellularLocation>
    <subcellularLocation>
        <location evidence="1">Nucleus speckle</location>
    </subcellularLocation>
    <subcellularLocation>
        <location evidence="1">Nucleus</location>
        <location evidence="1">Cajal body</location>
    </subcellularLocation>
    <text evidence="1">Predominantly found in speckles and in Cajal bodies.</text>
</comment>
<comment type="alternative products">
    <event type="alternative splicing"/>
    <isoform>
        <id>Q8CCF0-1</id>
        <name>1</name>
        <sequence type="displayed"/>
    </isoform>
    <isoform>
        <id>Q8CCF0-2</id>
        <name>2</name>
        <sequence type="described" ref="VSP_017591"/>
    </isoform>
    <isoform>
        <id>Q8CCF0-4</id>
        <name>4</name>
        <sequence type="described" ref="VSP_017589 VSP_017590"/>
    </isoform>
</comment>
<comment type="domain">
    <text evidence="1">Interacts with the snRNP via the Nop domain.</text>
</comment>
<comment type="domain">
    <text evidence="1">The coiled coil domain is formed by two non-contiguous helices.</text>
</comment>
<comment type="PTM">
    <text evidence="1">Phosphorylated by PRP4K during spliceosome assembly.</text>
</comment>
<comment type="miscellaneous">
    <molecule>Isoform 4</molecule>
    <text evidence="6">May be produced at very low levels due to a premature stop codon in the mRNA, leading to nonsense-mediated mRNA decay.</text>
</comment>
<comment type="similarity">
    <text evidence="6">Belongs to the PRP31 family.</text>
</comment>
<comment type="sequence caution" evidence="6">
    <conflict type="frameshift">
        <sequence resource="EMBL-CDS" id="BAC25109"/>
    </conflict>
</comment>
<comment type="sequence caution" evidence="6">
    <conflict type="miscellaneous discrepancy">
        <sequence resource="EMBL-CDS" id="BAC31903"/>
    </conflict>
    <text>Contaminating sequence. The C-terminus matches chromosome 19 region.</text>
</comment>
<comment type="sequence caution" evidence="6">
    <conflict type="erroneous translation">
        <sequence resource="EMBL-CDS" id="BAC31931"/>
    </conflict>
    <text>Wrong choice of frame.</text>
</comment>
<comment type="sequence caution" evidence="6">
    <conflict type="frameshift">
        <sequence resource="EMBL-CDS" id="BAC34578"/>
    </conflict>
</comment>
<proteinExistence type="evidence at protein level"/>
<accession>Q8CCF0</accession>
<accession>E9QPM6</accession>
<accession>Q6P7X2</accession>
<accession>Q8BQ91</accession>
<accession>Q8C8U4</accession>
<accession>Q8C8V5</accession>
<accession>Q8CCG6</accession>
<accession>Q8CF52</accession>
<accession>Q8VBW3</accession>
<name>PRP31_MOUSE</name>
<sequence>MSLADELLADLEEAAEEEEGGSYGEEEEEPAIEDVQEETQLDLSGDSVKSIAKLWDSKMFAEIMMKIEEYISKQANVSEVMGPVEAAPEYRVIVDANNLTVEIENELNIIHKFIRDKYSKRFPELESLVPNALDYIRTVKELGNSLDKCKNNENLQQILTNATIMVVSVTASTTQGQQLSDEELERLEEACDMALELNASKHRIYEYVESRMSFIAPNLSIIIGASTAAKIMGVAGGLTNLSKMPACNIMLLGAQRKTLSGFSSTSVLPHTGYIYHSDIVQSLPPDLRRKAARLVAAKCTLAARVDSFHESTEGKVGYELKDEIERKFDKWQEPPPVKQVKPLPAPLDGQRKKRGGRRYRKMKERLGLTEIRKQANRMSFGEIEEDAYQEDLGFSLGHLGKSGSGRVRQTQVNEATKARISKTLQRTLQKQSVVYGGKSTIRDRSSGTASSVAFTPLQGLEIVNPQAAEKKVAEANQKYFSSMAEFLKVKGEKSGTMST</sequence>
<organism>
    <name type="scientific">Mus musculus</name>
    <name type="common">Mouse</name>
    <dbReference type="NCBI Taxonomy" id="10090"/>
    <lineage>
        <taxon>Eukaryota</taxon>
        <taxon>Metazoa</taxon>
        <taxon>Chordata</taxon>
        <taxon>Craniata</taxon>
        <taxon>Vertebrata</taxon>
        <taxon>Euteleostomi</taxon>
        <taxon>Mammalia</taxon>
        <taxon>Eutheria</taxon>
        <taxon>Euarchontoglires</taxon>
        <taxon>Glires</taxon>
        <taxon>Rodentia</taxon>
        <taxon>Myomorpha</taxon>
        <taxon>Muroidea</taxon>
        <taxon>Muridae</taxon>
        <taxon>Murinae</taxon>
        <taxon>Mus</taxon>
        <taxon>Mus</taxon>
    </lineage>
</organism>